<protein>
    <recommendedName>
        <fullName>Uncharacterized protein L645</fullName>
    </recommendedName>
</protein>
<gene>
    <name type="ordered locus">MIMI_L645</name>
</gene>
<evidence type="ECO:0000256" key="1">
    <source>
        <dbReference type="SAM" id="MobiDB-lite"/>
    </source>
</evidence>
<proteinExistence type="predicted"/>
<reference key="1">
    <citation type="journal article" date="2004" name="Science">
        <title>The 1.2-megabase genome sequence of Mimivirus.</title>
        <authorList>
            <person name="Raoult D."/>
            <person name="Audic S."/>
            <person name="Robert C."/>
            <person name="Abergel C."/>
            <person name="Renesto P."/>
            <person name="Ogata H."/>
            <person name="La Scola B."/>
            <person name="Susan M."/>
            <person name="Claverie J.-M."/>
        </authorList>
    </citation>
    <scope>NUCLEOTIDE SEQUENCE [LARGE SCALE GENOMIC DNA]</scope>
    <source>
        <strain>Rowbotham-Bradford</strain>
    </source>
</reference>
<feature type="chain" id="PRO_0000253289" description="Uncharacterized protein L645">
    <location>
        <begin position="1"/>
        <end position="407"/>
    </location>
</feature>
<feature type="region of interest" description="Disordered" evidence="1">
    <location>
        <begin position="1"/>
        <end position="64"/>
    </location>
</feature>
<feature type="region of interest" description="Disordered" evidence="1">
    <location>
        <begin position="110"/>
        <end position="276"/>
    </location>
</feature>
<feature type="region of interest" description="Disordered" evidence="1">
    <location>
        <begin position="314"/>
        <end position="341"/>
    </location>
</feature>
<feature type="compositionally biased region" description="Polar residues" evidence="1">
    <location>
        <begin position="7"/>
        <end position="32"/>
    </location>
</feature>
<feature type="compositionally biased region" description="Basic and acidic residues" evidence="1">
    <location>
        <begin position="33"/>
        <end position="44"/>
    </location>
</feature>
<feature type="compositionally biased region" description="Acidic residues" evidence="1">
    <location>
        <begin position="122"/>
        <end position="137"/>
    </location>
</feature>
<feature type="compositionally biased region" description="Polar residues" evidence="1">
    <location>
        <begin position="138"/>
        <end position="147"/>
    </location>
</feature>
<feature type="compositionally biased region" description="Polar residues" evidence="1">
    <location>
        <begin position="184"/>
        <end position="201"/>
    </location>
</feature>
<feature type="compositionally biased region" description="Low complexity" evidence="1">
    <location>
        <begin position="209"/>
        <end position="231"/>
    </location>
</feature>
<feature type="compositionally biased region" description="Basic residues" evidence="1">
    <location>
        <begin position="232"/>
        <end position="246"/>
    </location>
</feature>
<feature type="compositionally biased region" description="Basic and acidic residues" evidence="1">
    <location>
        <begin position="247"/>
        <end position="258"/>
    </location>
</feature>
<feature type="compositionally biased region" description="Basic residues" evidence="1">
    <location>
        <begin position="259"/>
        <end position="270"/>
    </location>
</feature>
<feature type="compositionally biased region" description="Basic residues" evidence="1">
    <location>
        <begin position="316"/>
        <end position="341"/>
    </location>
</feature>
<accession>Q5UP44</accession>
<dbReference type="EMBL" id="AY653733">
    <property type="protein sequence ID" value="AAV50906.1"/>
    <property type="molecule type" value="Genomic_DNA"/>
</dbReference>
<dbReference type="SMR" id="Q5UP44"/>
<dbReference type="KEGG" id="vg:9925288"/>
<dbReference type="Proteomes" id="UP000001134">
    <property type="component" value="Genome"/>
</dbReference>
<organism>
    <name type="scientific">Acanthamoeba polyphaga mimivirus</name>
    <name type="common">APMV</name>
    <dbReference type="NCBI Taxonomy" id="212035"/>
    <lineage>
        <taxon>Viruses</taxon>
        <taxon>Varidnaviria</taxon>
        <taxon>Bamfordvirae</taxon>
        <taxon>Nucleocytoviricota</taxon>
        <taxon>Megaviricetes</taxon>
        <taxon>Imitervirales</taxon>
        <taxon>Mimiviridae</taxon>
        <taxon>Megamimivirinae</taxon>
        <taxon>Mimivirus</taxon>
        <taxon>Mimivirus bradfordmassiliense</taxon>
    </lineage>
</organism>
<keyword id="KW-1185">Reference proteome</keyword>
<organismHost>
    <name type="scientific">Acanthamoeba polyphaga</name>
    <name type="common">Amoeba</name>
    <dbReference type="NCBI Taxonomy" id="5757"/>
</organismHost>
<sequence>MSRKSNKQSNPKRNYKNDNYFQENSYTMTNGFTKDKDGKPVEFKKYHRRRKDPYDYSSDEEPFDEQFQNEIKKNIQKNFKKFGNNNFNPNFNPNFNPNFVPEFSSGFPTGFGPDFNFRNQEDSDSEYSDECLTDECSDNYNKQSTDSNKPKSYYIRRKKSGSKKSIPKESIPQQSVIGEKISENFDNTVPIPQNDTTNSQPKSPKPSKSKSSSKSSKSNKSNKSSKSNKSSKSSKSKSNKHSKHKNKSDSSSDSDEKTHKHKDRRHRRGRCTYPQFYDFIPPMPEIPGMPEMPDFFNQTPFNPNNPNFNCGCNQSRPRKSSHDRHKHHNKHKHHNGHHNNPHYHNNNLNFNTNNQFPFDANNFNNQLFSNIFDPNNFNPQNYQTYSGCPSCNVPNSNYGPNNFRPNY</sequence>
<name>YL645_MIMIV</name>